<proteinExistence type="inferred from homology"/>
<keyword id="KW-0067">ATP-binding</keyword>
<keyword id="KW-0235">DNA replication</keyword>
<keyword id="KW-0238">DNA-binding</keyword>
<keyword id="KW-0347">Helicase</keyword>
<keyword id="KW-0378">Hydrolase</keyword>
<keyword id="KW-0413">Isomerase</keyword>
<keyword id="KW-0547">Nucleotide-binding</keyword>
<keyword id="KW-0639">Primosome</keyword>
<keyword id="KW-1185">Reference proteome</keyword>
<reference key="1">
    <citation type="journal article" date="1988" name="J. Bacteriol.">
        <title>Sequence of the dnaB gene of Salmonella typhimurium.</title>
        <authorList>
            <person name="Wong A."/>
            <person name="Kean L."/>
            <person name="Maurer R."/>
        </authorList>
    </citation>
    <scope>NUCLEOTIDE SEQUENCE [GENOMIC DNA]</scope>
</reference>
<reference key="2">
    <citation type="journal article" date="2001" name="Nature">
        <title>Complete genome sequence of Salmonella enterica serovar Typhimurium LT2.</title>
        <authorList>
            <person name="McClelland M."/>
            <person name="Sanderson K.E."/>
            <person name="Spieth J."/>
            <person name="Clifton S.W."/>
            <person name="Latreille P."/>
            <person name="Courtney L."/>
            <person name="Porwollik S."/>
            <person name="Ali J."/>
            <person name="Dante M."/>
            <person name="Du F."/>
            <person name="Hou S."/>
            <person name="Layman D."/>
            <person name="Leonard S."/>
            <person name="Nguyen C."/>
            <person name="Scott K."/>
            <person name="Holmes A."/>
            <person name="Grewal N."/>
            <person name="Mulvaney E."/>
            <person name="Ryan E."/>
            <person name="Sun H."/>
            <person name="Florea L."/>
            <person name="Miller W."/>
            <person name="Stoneking T."/>
            <person name="Nhan M."/>
            <person name="Waterston R."/>
            <person name="Wilson R.K."/>
        </authorList>
    </citation>
    <scope>NUCLEOTIDE SEQUENCE [LARGE SCALE GENOMIC DNA]</scope>
    <source>
        <strain>LT2 / SGSC1412 / ATCC 700720</strain>
    </source>
</reference>
<name>DNAB_SALTY</name>
<comment type="function">
    <text evidence="1">The main replicative DNA helicase, it participates in initiation and elongation during chromosome replication. Travels ahead of the DNA replisome, separating dsDNA into templates for DNA synthesis. A processive ATP-dependent 5'-3' DNA helicase it has DNA-dependent ATPase activity.</text>
</comment>
<comment type="catalytic activity">
    <reaction evidence="1">
        <text>Couples ATP hydrolysis with the unwinding of duplex DNA at the replication fork by translocating in the 5'-3' direction. This creates two antiparallel DNA single strands (ssDNA). The leading ssDNA polymer is the template for DNA polymerase III holoenzyme which synthesizes a continuous strand.</text>
        <dbReference type="EC" id="5.6.2.3"/>
    </reaction>
</comment>
<comment type="catalytic activity">
    <reaction evidence="1">
        <text>ATP + H2O = ADP + phosphate + H(+)</text>
        <dbReference type="Rhea" id="RHEA:13065"/>
        <dbReference type="ChEBI" id="CHEBI:15377"/>
        <dbReference type="ChEBI" id="CHEBI:15378"/>
        <dbReference type="ChEBI" id="CHEBI:30616"/>
        <dbReference type="ChEBI" id="CHEBI:43474"/>
        <dbReference type="ChEBI" id="CHEBI:456216"/>
        <dbReference type="EC" id="5.6.2.3"/>
    </reaction>
</comment>
<comment type="subunit">
    <text evidence="1">Homohexamer.</text>
</comment>
<comment type="similarity">
    <text evidence="4">Belongs to the helicase family. DnaB subfamily.</text>
</comment>
<evidence type="ECO:0000250" key="1">
    <source>
        <dbReference type="UniProtKB" id="P0ACB0"/>
    </source>
</evidence>
<evidence type="ECO:0000255" key="2">
    <source>
        <dbReference type="PROSITE-ProRule" id="PRU00596"/>
    </source>
</evidence>
<evidence type="ECO:0000256" key="3">
    <source>
        <dbReference type="SAM" id="MobiDB-lite"/>
    </source>
</evidence>
<evidence type="ECO:0000305" key="4"/>
<gene>
    <name type="primary">dnaB</name>
    <name type="ordered locus">STM4246</name>
</gene>
<sequence length="471" mass="52687">MAGNKPFNKPQTDARDRDPQVAGIKVPPHSIEAEQSVLGGLMLDNERWDDVAERVVAEDFYTRPHRHIFTEMGRLQESGSPIDLITLAESLERQGQLDSVGGFAYLAELSKNTPSAANISAYADIVRERAVVRDMIAVAHEIADAGYDPQGRNSDELLDLAESRVFQIAENRANKDEGPKSIDQILDATVARIEQLFQQPHDGVTGVDTGYQDLNKKTAGLQRSDLIIVAARPSMGKTTFAMNLCENAAMLQDKPVLIFSLEMPGEQIMMRMLASLSRVDQTRIRTGQLDDEDWARISGTMGILLEKRNMYIDDSSGLTPTEVRSRARRIFREHGGLSLIMIDYLQLMRVPSLSDNRTLEIAEISRSLKALAKELQVPVVALSQLNRSLEQRADKRPVNSDLRESGSIEQDADLIMFIYRDEVYHENSDLKGIAEIIIGKQRNGPIGTVRLTFNGQWSRFDNYAGPQYDDE</sequence>
<feature type="chain" id="PRO_0000102031" description="Replicative DNA helicase DnaB">
    <location>
        <begin position="1"/>
        <end position="471"/>
    </location>
</feature>
<feature type="domain" description="SF4 helicase" evidence="2">
    <location>
        <begin position="200"/>
        <end position="467"/>
    </location>
</feature>
<feature type="region of interest" description="Disordered" evidence="3">
    <location>
        <begin position="1"/>
        <end position="22"/>
    </location>
</feature>
<feature type="binding site" evidence="4">
    <location>
        <begin position="231"/>
        <end position="238"/>
    </location>
    <ligand>
        <name>ATP</name>
        <dbReference type="ChEBI" id="CHEBI:30616"/>
    </ligand>
</feature>
<dbReference type="EC" id="5.6.2.3" evidence="1"/>
<dbReference type="EMBL" id="J03390">
    <property type="status" value="NOT_ANNOTATED_CDS"/>
    <property type="molecule type" value="Genomic_DNA"/>
</dbReference>
<dbReference type="EMBL" id="AE006468">
    <property type="protein sequence ID" value="AAL23070.1"/>
    <property type="molecule type" value="Genomic_DNA"/>
</dbReference>
<dbReference type="PIR" id="A32011">
    <property type="entry name" value="A32011"/>
</dbReference>
<dbReference type="RefSeq" id="NP_463111.1">
    <property type="nucleotide sequence ID" value="NC_003197.2"/>
</dbReference>
<dbReference type="RefSeq" id="WP_000918353.1">
    <property type="nucleotide sequence ID" value="NC_003197.2"/>
</dbReference>
<dbReference type="SMR" id="P0A1Q4"/>
<dbReference type="STRING" id="99287.STM4246"/>
<dbReference type="PaxDb" id="99287-STM4246"/>
<dbReference type="GeneID" id="1255772"/>
<dbReference type="KEGG" id="stm:STM4246"/>
<dbReference type="PATRIC" id="fig|99287.12.peg.4466"/>
<dbReference type="HOGENOM" id="CLU_005373_0_0_6"/>
<dbReference type="OMA" id="IEFHARI"/>
<dbReference type="PhylomeDB" id="P0A1Q4"/>
<dbReference type="BioCyc" id="SENT99287:STM4246-MONOMER"/>
<dbReference type="Proteomes" id="UP000001014">
    <property type="component" value="Chromosome"/>
</dbReference>
<dbReference type="GO" id="GO:0005829">
    <property type="term" value="C:cytosol"/>
    <property type="evidence" value="ECO:0000318"/>
    <property type="project" value="GO_Central"/>
</dbReference>
<dbReference type="GO" id="GO:1990077">
    <property type="term" value="C:primosome complex"/>
    <property type="evidence" value="ECO:0007669"/>
    <property type="project" value="UniProtKB-KW"/>
</dbReference>
<dbReference type="GO" id="GO:0005524">
    <property type="term" value="F:ATP binding"/>
    <property type="evidence" value="ECO:0007669"/>
    <property type="project" value="UniProtKB-KW"/>
</dbReference>
<dbReference type="GO" id="GO:0016887">
    <property type="term" value="F:ATP hydrolysis activity"/>
    <property type="evidence" value="ECO:0007669"/>
    <property type="project" value="InterPro"/>
</dbReference>
<dbReference type="GO" id="GO:0003677">
    <property type="term" value="F:DNA binding"/>
    <property type="evidence" value="ECO:0007669"/>
    <property type="project" value="UniProtKB-KW"/>
</dbReference>
<dbReference type="GO" id="GO:0003678">
    <property type="term" value="F:DNA helicase activity"/>
    <property type="evidence" value="ECO:0000318"/>
    <property type="project" value="GO_Central"/>
</dbReference>
<dbReference type="GO" id="GO:0006260">
    <property type="term" value="P:DNA replication"/>
    <property type="evidence" value="ECO:0000318"/>
    <property type="project" value="GO_Central"/>
</dbReference>
<dbReference type="GO" id="GO:0006269">
    <property type="term" value="P:DNA replication, synthesis of primer"/>
    <property type="evidence" value="ECO:0007669"/>
    <property type="project" value="UniProtKB-KW"/>
</dbReference>
<dbReference type="CDD" id="cd00984">
    <property type="entry name" value="DnaB_C"/>
    <property type="match status" value="1"/>
</dbReference>
<dbReference type="FunFam" id="1.10.860.10:FF:000002">
    <property type="entry name" value="Replicative DNA helicase"/>
    <property type="match status" value="1"/>
</dbReference>
<dbReference type="FunFam" id="3.40.50.300:FF:000076">
    <property type="entry name" value="Replicative DNA helicase"/>
    <property type="match status" value="1"/>
</dbReference>
<dbReference type="Gene3D" id="1.10.860.10">
    <property type="entry name" value="DNAb Helicase, Chain A"/>
    <property type="match status" value="1"/>
</dbReference>
<dbReference type="Gene3D" id="3.40.50.300">
    <property type="entry name" value="P-loop containing nucleotide triphosphate hydrolases"/>
    <property type="match status" value="1"/>
</dbReference>
<dbReference type="InterPro" id="IPR003593">
    <property type="entry name" value="AAA+_ATPase"/>
</dbReference>
<dbReference type="InterPro" id="IPR036185">
    <property type="entry name" value="DNA_heli_DnaB-like_N_sf"/>
</dbReference>
<dbReference type="InterPro" id="IPR007692">
    <property type="entry name" value="DNA_helicase_DnaB"/>
</dbReference>
<dbReference type="InterPro" id="IPR007694">
    <property type="entry name" value="DNA_helicase_DnaB-like_C"/>
</dbReference>
<dbReference type="InterPro" id="IPR007693">
    <property type="entry name" value="DNA_helicase_DnaB-like_N"/>
</dbReference>
<dbReference type="InterPro" id="IPR016136">
    <property type="entry name" value="DNA_helicase_N/primase_C"/>
</dbReference>
<dbReference type="InterPro" id="IPR027417">
    <property type="entry name" value="P-loop_NTPase"/>
</dbReference>
<dbReference type="NCBIfam" id="TIGR00665">
    <property type="entry name" value="DnaB"/>
    <property type="match status" value="1"/>
</dbReference>
<dbReference type="NCBIfam" id="NF004384">
    <property type="entry name" value="PRK05748.1"/>
    <property type="match status" value="1"/>
</dbReference>
<dbReference type="NCBIfam" id="NF005945">
    <property type="entry name" value="PRK08006.1"/>
    <property type="match status" value="1"/>
</dbReference>
<dbReference type="NCBIfam" id="NF006458">
    <property type="entry name" value="PRK08840.1"/>
    <property type="match status" value="1"/>
</dbReference>
<dbReference type="PANTHER" id="PTHR30153:SF2">
    <property type="entry name" value="REPLICATIVE DNA HELICASE"/>
    <property type="match status" value="1"/>
</dbReference>
<dbReference type="PANTHER" id="PTHR30153">
    <property type="entry name" value="REPLICATIVE DNA HELICASE DNAB"/>
    <property type="match status" value="1"/>
</dbReference>
<dbReference type="Pfam" id="PF00772">
    <property type="entry name" value="DnaB"/>
    <property type="match status" value="1"/>
</dbReference>
<dbReference type="Pfam" id="PF03796">
    <property type="entry name" value="DnaB_C"/>
    <property type="match status" value="1"/>
</dbReference>
<dbReference type="SMART" id="SM00382">
    <property type="entry name" value="AAA"/>
    <property type="match status" value="1"/>
</dbReference>
<dbReference type="SUPFAM" id="SSF48024">
    <property type="entry name" value="N-terminal domain of DnaB helicase"/>
    <property type="match status" value="1"/>
</dbReference>
<dbReference type="SUPFAM" id="SSF52540">
    <property type="entry name" value="P-loop containing nucleoside triphosphate hydrolases"/>
    <property type="match status" value="1"/>
</dbReference>
<dbReference type="PROSITE" id="PS51199">
    <property type="entry name" value="SF4_HELICASE"/>
    <property type="match status" value="1"/>
</dbReference>
<protein>
    <recommendedName>
        <fullName>Replicative DNA helicase DnaB</fullName>
        <ecNumber evidence="1">5.6.2.3</ecNumber>
    </recommendedName>
    <alternativeName>
        <fullName evidence="4">DNA 5'-3' helicase DnaB</fullName>
    </alternativeName>
</protein>
<organism>
    <name type="scientific">Salmonella typhimurium (strain LT2 / SGSC1412 / ATCC 700720)</name>
    <dbReference type="NCBI Taxonomy" id="99287"/>
    <lineage>
        <taxon>Bacteria</taxon>
        <taxon>Pseudomonadati</taxon>
        <taxon>Pseudomonadota</taxon>
        <taxon>Gammaproteobacteria</taxon>
        <taxon>Enterobacterales</taxon>
        <taxon>Enterobacteriaceae</taxon>
        <taxon>Salmonella</taxon>
    </lineage>
</organism>
<accession>P0A1Q4</accession>
<accession>P10338</accession>